<accession>Q5AR23</accession>
<accession>C8VQ96</accession>
<dbReference type="EC" id="4.2.3.-" evidence="7"/>
<dbReference type="EMBL" id="BN001308">
    <property type="protein sequence ID" value="CBF87263.1"/>
    <property type="molecule type" value="Genomic_DNA"/>
</dbReference>
<dbReference type="EMBL" id="AACD01000172">
    <property type="protein sequence ID" value="EAA66324.1"/>
    <property type="molecule type" value="Genomic_DNA"/>
</dbReference>
<dbReference type="RefSeq" id="XP_682526.1">
    <property type="nucleotide sequence ID" value="XM_677434.1"/>
</dbReference>
<dbReference type="STRING" id="227321.Q5AR23"/>
<dbReference type="EnsemblFungi" id="CBF87263">
    <property type="protein sequence ID" value="CBF87263"/>
    <property type="gene ID" value="ANIA_09257"/>
</dbReference>
<dbReference type="KEGG" id="ani:ANIA_09257"/>
<dbReference type="HOGENOM" id="CLU_087059_3_0_1"/>
<dbReference type="InParanoid" id="Q5AR23"/>
<dbReference type="OMA" id="CNDIGWE"/>
<dbReference type="OrthoDB" id="5294024at2759"/>
<dbReference type="UniPathway" id="UPA00213"/>
<dbReference type="Proteomes" id="UP000000560">
    <property type="component" value="Chromosome VIII"/>
</dbReference>
<dbReference type="GO" id="GO:0016020">
    <property type="term" value="C:membrane"/>
    <property type="evidence" value="ECO:0007669"/>
    <property type="project" value="UniProtKB-SubCell"/>
</dbReference>
<dbReference type="GO" id="GO:0016829">
    <property type="term" value="F:lyase activity"/>
    <property type="evidence" value="ECO:0007669"/>
    <property type="project" value="UniProtKB-KW"/>
</dbReference>
<dbReference type="GO" id="GO:0016114">
    <property type="term" value="P:terpenoid biosynthetic process"/>
    <property type="evidence" value="ECO:0007669"/>
    <property type="project" value="UniProtKB-UniPathway"/>
</dbReference>
<dbReference type="InterPro" id="IPR039020">
    <property type="entry name" value="PaxB-like"/>
</dbReference>
<dbReference type="PANTHER" id="PTHR42038">
    <property type="match status" value="1"/>
</dbReference>
<dbReference type="PANTHER" id="PTHR42038:SF2">
    <property type="entry name" value="TERPENE CYCLASE AUSL"/>
    <property type="match status" value="1"/>
</dbReference>
<dbReference type="Pfam" id="PF25129">
    <property type="entry name" value="Pyr4-TMTC"/>
    <property type="match status" value="1"/>
</dbReference>
<comment type="function">
    <text evidence="2 3 4 5">Terpene cyclase; part of the gene cluster B that mediates the biosynthesis of austinol and dehydroaustinol, two fungal meroterpenoids (PubMed:22329759). The first step of the pathway is the synthesis of 3,5-dimethylorsellinic acid by the polyketide synthase ausA (PubMed:22329759). 3,5-dimethylorsellinic acid is then prenylated by the polyprenyl transferase ausN (PubMed:22329759). Further epoxidation by the FAD-dependent monooxygenase ausM and cyclization by the probable terpene cyclase ausL lead to the formation of protoaustinoid A (PubMed:22329759). Protoaustinoid A is then oxidized to spiro-lactone preaustinoid A3 by the combined action of the FAD-binding monooxygenases ausB and ausC, and the dioxygenase ausE (PubMed:22329759, PubMed:23865690). Acid-catalyzed keto-rearrangement and ring contraction of the tetraketide portion of preaustinoid A3 by ausJ lead to the formation of preaustinoid A4 (PubMed:22329759). The aldo-keto reductase ausK, with the help of ausH, is involved in the next step by transforming preaustinoid A4 into isoaustinone which is in turn hydroxylated by the P450 monooxygenase ausI to form austinolide (PubMed:22329759). Finally, the cytochrome P450 monooxygenase ausG modifies austinolide to austinol (PubMed:22329759). Austinol can be further modified to dehydroaustinol which forms a diffusible complex with diorcinol that initiates conidiation (PubMed:22234162, PubMed:22329759). Due to genetic rearrangements of the clusters and the subsequent loss of some enzymes, the end products of the Emericella nidulans austinoid biosynthesis clusters are austinol and dehydroaustinol, even if additional enzymes, such as the O-acetyltransferase ausQ and the cytochrome P450 monooxygenase ausR are still functional (PubMed:29076725).</text>
</comment>
<comment type="pathway">
    <text evidence="3">Secondary metabolite biosynthesis; terpenoid biosynthesis.</text>
</comment>
<comment type="subcellular location">
    <subcellularLocation>
        <location evidence="1">Membrane</location>
        <topology evidence="1">Multi-pass membrane protein</topology>
    </subcellularLocation>
</comment>
<comment type="disruption phenotype">
    <text evidence="3">Impairs the synthesis of austinol and dehydroaustinol (PubMed:22329759).</text>
</comment>
<comment type="miscellaneous">
    <text evidence="8">In A.calidoustus, the austinoid gene cluster lies on a contiguous DNA region, while clusters from E.nidulans and P.brasilianum are split in their respective genomes. Genetic rearrangements provoked variability among the clusters and E.nidulans produces the least number of austionoid derivatives with the end products austinol and dehydroaustinol, while P.brasilianum can produce until acetoxydehydroaustin, and A.calidoustus produces the highest number of identified derivatives.</text>
</comment>
<comment type="similarity">
    <text evidence="7">Belongs to the paxB family.</text>
</comment>
<protein>
    <recommendedName>
        <fullName evidence="6">Terpene cyclase ausL</fullName>
        <ecNumber evidence="7">4.2.3.-</ecNumber>
    </recommendedName>
    <alternativeName>
        <fullName evidence="6">Austinoid biosynthesis clusters protein L</fullName>
    </alternativeName>
</protein>
<keyword id="KW-0456">Lyase</keyword>
<keyword id="KW-0472">Membrane</keyword>
<keyword id="KW-1185">Reference proteome</keyword>
<keyword id="KW-0812">Transmembrane</keyword>
<keyword id="KW-1133">Transmembrane helix</keyword>
<sequence length="204" mass="21740">MSQLTISKIIEEPFSALSLSEMLKILAALGWSTNYLAMVYRTQADKLPAIAVLPLCCDIAWEFTYAWIYPQASGHWQGVVRVWFFLHTAVLAATLRYAPNDWAGTPLGESRGRLVLLYAAVIAAFAAGQLCLALEMGGALGFHWGGALCQFLSSSAAVGQLLTRGHTRGASLLIWGARAISTAGGDRALIGCVVSGAVPIDQKA</sequence>
<feature type="chain" id="PRO_0000436492" description="Terpene cyclase ausL">
    <location>
        <begin position="1"/>
        <end position="204"/>
    </location>
</feature>
<feature type="transmembrane region" description="Helical" evidence="1">
    <location>
        <begin position="19"/>
        <end position="39"/>
    </location>
</feature>
<feature type="transmembrane region" description="Helical" evidence="1">
    <location>
        <begin position="49"/>
        <end position="69"/>
    </location>
</feature>
<feature type="transmembrane region" description="Helical" evidence="1">
    <location>
        <begin position="75"/>
        <end position="95"/>
    </location>
</feature>
<feature type="transmembrane region" description="Helical" evidence="1">
    <location>
        <begin position="114"/>
        <end position="134"/>
    </location>
</feature>
<feature type="transmembrane region" description="Helical" evidence="1">
    <location>
        <begin position="138"/>
        <end position="158"/>
    </location>
</feature>
<organism>
    <name type="scientific">Emericella nidulans (strain FGSC A4 / ATCC 38163 / CBS 112.46 / NRRL 194 / M139)</name>
    <name type="common">Aspergillus nidulans</name>
    <dbReference type="NCBI Taxonomy" id="227321"/>
    <lineage>
        <taxon>Eukaryota</taxon>
        <taxon>Fungi</taxon>
        <taxon>Dikarya</taxon>
        <taxon>Ascomycota</taxon>
        <taxon>Pezizomycotina</taxon>
        <taxon>Eurotiomycetes</taxon>
        <taxon>Eurotiomycetidae</taxon>
        <taxon>Eurotiales</taxon>
        <taxon>Aspergillaceae</taxon>
        <taxon>Aspergillus</taxon>
        <taxon>Aspergillus subgen. Nidulantes</taxon>
    </lineage>
</organism>
<gene>
    <name evidence="6" type="primary">ausL</name>
    <name type="ORF">AN9257</name>
</gene>
<name>AUSL_EMENI</name>
<reference key="1">
    <citation type="journal article" date="2005" name="Nature">
        <title>Sequencing of Aspergillus nidulans and comparative analysis with A. fumigatus and A. oryzae.</title>
        <authorList>
            <person name="Galagan J.E."/>
            <person name="Calvo S.E."/>
            <person name="Cuomo C."/>
            <person name="Ma L.-J."/>
            <person name="Wortman J.R."/>
            <person name="Batzoglou S."/>
            <person name="Lee S.-I."/>
            <person name="Bastuerkmen M."/>
            <person name="Spevak C.C."/>
            <person name="Clutterbuck J."/>
            <person name="Kapitonov V."/>
            <person name="Jurka J."/>
            <person name="Scazzocchio C."/>
            <person name="Farman M.L."/>
            <person name="Butler J."/>
            <person name="Purcell S."/>
            <person name="Harris S."/>
            <person name="Braus G.H."/>
            <person name="Draht O."/>
            <person name="Busch S."/>
            <person name="D'Enfert C."/>
            <person name="Bouchier C."/>
            <person name="Goldman G.H."/>
            <person name="Bell-Pedersen D."/>
            <person name="Griffiths-Jones S."/>
            <person name="Doonan J.H."/>
            <person name="Yu J."/>
            <person name="Vienken K."/>
            <person name="Pain A."/>
            <person name="Freitag M."/>
            <person name="Selker E.U."/>
            <person name="Archer D.B."/>
            <person name="Penalva M.A."/>
            <person name="Oakley B.R."/>
            <person name="Momany M."/>
            <person name="Tanaka T."/>
            <person name="Kumagai T."/>
            <person name="Asai K."/>
            <person name="Machida M."/>
            <person name="Nierman W.C."/>
            <person name="Denning D.W."/>
            <person name="Caddick M.X."/>
            <person name="Hynes M."/>
            <person name="Paoletti M."/>
            <person name="Fischer R."/>
            <person name="Miller B.L."/>
            <person name="Dyer P.S."/>
            <person name="Sachs M.S."/>
            <person name="Osmani S.A."/>
            <person name="Birren B.W."/>
        </authorList>
    </citation>
    <scope>NUCLEOTIDE SEQUENCE [LARGE SCALE GENOMIC DNA]</scope>
    <source>
        <strain>FGSC A4 / ATCC 38163 / CBS 112.46 / NRRL 194 / M139</strain>
    </source>
</reference>
<reference key="2">
    <citation type="journal article" date="2009" name="Fungal Genet. Biol.">
        <title>The 2008 update of the Aspergillus nidulans genome annotation: a community effort.</title>
        <authorList>
            <person name="Wortman J.R."/>
            <person name="Gilsenan J.M."/>
            <person name="Joardar V."/>
            <person name="Deegan J."/>
            <person name="Clutterbuck J."/>
            <person name="Andersen M.R."/>
            <person name="Archer D."/>
            <person name="Bencina M."/>
            <person name="Braus G."/>
            <person name="Coutinho P."/>
            <person name="von Dohren H."/>
            <person name="Doonan J."/>
            <person name="Driessen A.J."/>
            <person name="Durek P."/>
            <person name="Espeso E."/>
            <person name="Fekete E."/>
            <person name="Flipphi M."/>
            <person name="Estrada C.G."/>
            <person name="Geysens S."/>
            <person name="Goldman G."/>
            <person name="de Groot P.W."/>
            <person name="Hansen K."/>
            <person name="Harris S.D."/>
            <person name="Heinekamp T."/>
            <person name="Helmstaedt K."/>
            <person name="Henrissat B."/>
            <person name="Hofmann G."/>
            <person name="Homan T."/>
            <person name="Horio T."/>
            <person name="Horiuchi H."/>
            <person name="James S."/>
            <person name="Jones M."/>
            <person name="Karaffa L."/>
            <person name="Karanyi Z."/>
            <person name="Kato M."/>
            <person name="Keller N."/>
            <person name="Kelly D.E."/>
            <person name="Kiel J.A."/>
            <person name="Kim J.M."/>
            <person name="van der Klei I.J."/>
            <person name="Klis F.M."/>
            <person name="Kovalchuk A."/>
            <person name="Krasevec N."/>
            <person name="Kubicek C.P."/>
            <person name="Liu B."/>
            <person name="Maccabe A."/>
            <person name="Meyer V."/>
            <person name="Mirabito P."/>
            <person name="Miskei M."/>
            <person name="Mos M."/>
            <person name="Mullins J."/>
            <person name="Nelson D.R."/>
            <person name="Nielsen J."/>
            <person name="Oakley B.R."/>
            <person name="Osmani S.A."/>
            <person name="Pakula T."/>
            <person name="Paszewski A."/>
            <person name="Paulsen I."/>
            <person name="Pilsyk S."/>
            <person name="Pocsi I."/>
            <person name="Punt P.J."/>
            <person name="Ram A.F."/>
            <person name="Ren Q."/>
            <person name="Robellet X."/>
            <person name="Robson G."/>
            <person name="Seiboth B."/>
            <person name="van Solingen P."/>
            <person name="Specht T."/>
            <person name="Sun J."/>
            <person name="Taheri-Talesh N."/>
            <person name="Takeshita N."/>
            <person name="Ussery D."/>
            <person name="vanKuyk P.A."/>
            <person name="Visser H."/>
            <person name="van de Vondervoort P.J."/>
            <person name="de Vries R.P."/>
            <person name="Walton J."/>
            <person name="Xiang X."/>
            <person name="Xiong Y."/>
            <person name="Zeng A.P."/>
            <person name="Brandt B.W."/>
            <person name="Cornell M.J."/>
            <person name="van den Hondel C.A."/>
            <person name="Visser J."/>
            <person name="Oliver S.G."/>
            <person name="Turner G."/>
        </authorList>
    </citation>
    <scope>GENOME REANNOTATION</scope>
    <source>
        <strain>FGSC A4 / ATCC 38163 / CBS 112.46 / NRRL 194 / M139</strain>
    </source>
</reference>
<reference key="3">
    <citation type="journal article" date="2012" name="ACS Chem. Biol.">
        <title>Signaling the induction of sporulation involves the interaction of two secondary metabolites in Aspergillus nidulans.</title>
        <authorList>
            <person name="Rodriguez-Urra A.B."/>
            <person name="Jimenez C."/>
            <person name="Nieto M.I."/>
            <person name="Rodriguez J."/>
            <person name="Hayashi H."/>
            <person name="Ugalde U."/>
        </authorList>
    </citation>
    <scope>FUNCTION</scope>
</reference>
<reference key="4">
    <citation type="journal article" date="2012" name="J. Am. Chem. Soc.">
        <title>Two separate gene clusters encode the biosynthetic pathway for the meroterpenoids austinol and dehydroaustinol in Aspergillus nidulans.</title>
        <authorList>
            <person name="Lo H.C."/>
            <person name="Entwistle R."/>
            <person name="Guo C.J."/>
            <person name="Ahuja M."/>
            <person name="Szewczyk E."/>
            <person name="Hung J.H."/>
            <person name="Chiang Y.M."/>
            <person name="Oakley B.R."/>
            <person name="Wang C.C."/>
        </authorList>
    </citation>
    <scope>FUNCTION</scope>
    <scope>DISRUPTION PHENOTYPE</scope>
</reference>
<reference key="5">
    <citation type="journal article" date="2013" name="J. Am. Chem. Soc.">
        <title>Spiro-ring formation is catalyzed by a multifunctional dioxygenase in austinol biosynthesis.</title>
        <authorList>
            <person name="Matsuda Y."/>
            <person name="Awakawa T."/>
            <person name="Wakimoto T."/>
            <person name="Abe I."/>
        </authorList>
    </citation>
    <scope>FUNCTION</scope>
</reference>
<reference key="6">
    <citation type="journal article" date="2017" name="ACS Chem. Biol.">
        <title>Rewiring of the austinoid biosynthetic pathway in filamentous fungi.</title>
        <authorList>
            <person name="Mattern D.J."/>
            <person name="Valiante V."/>
            <person name="Horn F."/>
            <person name="Petzke L."/>
            <person name="Brakhage A.A."/>
        </authorList>
    </citation>
    <scope>FUNCTION</scope>
</reference>
<evidence type="ECO:0000255" key="1"/>
<evidence type="ECO:0000269" key="2">
    <source>
    </source>
</evidence>
<evidence type="ECO:0000269" key="3">
    <source>
    </source>
</evidence>
<evidence type="ECO:0000269" key="4">
    <source>
    </source>
</evidence>
<evidence type="ECO:0000269" key="5">
    <source>
    </source>
</evidence>
<evidence type="ECO:0000303" key="6">
    <source>
    </source>
</evidence>
<evidence type="ECO:0000305" key="7"/>
<evidence type="ECO:0000305" key="8">
    <source>
    </source>
</evidence>
<proteinExistence type="inferred from homology"/>